<keyword id="KW-0249">Electron transport</keyword>
<keyword id="KW-0349">Heme</keyword>
<keyword id="KW-0408">Iron</keyword>
<keyword id="KW-0479">Metal-binding</keyword>
<keyword id="KW-0496">Mitochondrion</keyword>
<keyword id="KW-1185">Reference proteome</keyword>
<keyword id="KW-0679">Respiratory chain</keyword>
<keyword id="KW-0813">Transport</keyword>
<dbReference type="EMBL" id="DQ481663">
    <property type="protein sequence ID" value="ABF22388.1"/>
    <property type="molecule type" value="Genomic_DNA"/>
</dbReference>
<dbReference type="SMR" id="Q1KL06"/>
<dbReference type="STRING" id="31033.ENSTRUP00000054566"/>
<dbReference type="Ensembl" id="ENSTRUT00000054312.2">
    <property type="protein sequence ID" value="ENSTRUP00000054566.1"/>
    <property type="gene ID" value="ENSTRUG00000024909.2"/>
</dbReference>
<dbReference type="GeneID" id="101067333"/>
<dbReference type="KEGG" id="tru:101067333"/>
<dbReference type="eggNOG" id="KOG3453">
    <property type="taxonomic scope" value="Eukaryota"/>
</dbReference>
<dbReference type="GeneTree" id="ENSGT00940000157883"/>
<dbReference type="HOGENOM" id="CLU_060944_3_0_1"/>
<dbReference type="InParanoid" id="Q1KL06"/>
<dbReference type="OMA" id="DKGIIWD"/>
<dbReference type="OrthoDB" id="449280at2759"/>
<dbReference type="TreeFam" id="TF300226"/>
<dbReference type="Proteomes" id="UP000005226">
    <property type="component" value="Chromosome 12"/>
</dbReference>
<dbReference type="GO" id="GO:0005758">
    <property type="term" value="C:mitochondrial intermembrane space"/>
    <property type="evidence" value="ECO:0007669"/>
    <property type="project" value="UniProtKB-SubCell"/>
</dbReference>
<dbReference type="GO" id="GO:0009055">
    <property type="term" value="F:electron transfer activity"/>
    <property type="evidence" value="ECO:0007669"/>
    <property type="project" value="InterPro"/>
</dbReference>
<dbReference type="GO" id="GO:0020037">
    <property type="term" value="F:heme binding"/>
    <property type="evidence" value="ECO:0007669"/>
    <property type="project" value="InterPro"/>
</dbReference>
<dbReference type="GO" id="GO:0046872">
    <property type="term" value="F:metal ion binding"/>
    <property type="evidence" value="ECO:0007669"/>
    <property type="project" value="UniProtKB-KW"/>
</dbReference>
<dbReference type="FunFam" id="1.10.760.10:FF:000001">
    <property type="entry name" value="Cytochrome c iso-1"/>
    <property type="match status" value="1"/>
</dbReference>
<dbReference type="Gene3D" id="1.10.760.10">
    <property type="entry name" value="Cytochrome c-like domain"/>
    <property type="match status" value="1"/>
</dbReference>
<dbReference type="InterPro" id="IPR009056">
    <property type="entry name" value="Cyt_c-like_dom"/>
</dbReference>
<dbReference type="InterPro" id="IPR036909">
    <property type="entry name" value="Cyt_c-like_dom_sf"/>
</dbReference>
<dbReference type="InterPro" id="IPR002327">
    <property type="entry name" value="Cyt_c_1A/1B"/>
</dbReference>
<dbReference type="PANTHER" id="PTHR11961">
    <property type="entry name" value="CYTOCHROME C"/>
    <property type="match status" value="1"/>
</dbReference>
<dbReference type="Pfam" id="PF00034">
    <property type="entry name" value="Cytochrom_C"/>
    <property type="match status" value="1"/>
</dbReference>
<dbReference type="PRINTS" id="PR00604">
    <property type="entry name" value="CYTCHRMECIAB"/>
</dbReference>
<dbReference type="SUPFAM" id="SSF46626">
    <property type="entry name" value="Cytochrome c"/>
    <property type="match status" value="1"/>
</dbReference>
<dbReference type="PROSITE" id="PS51007">
    <property type="entry name" value="CYTC"/>
    <property type="match status" value="1"/>
</dbReference>
<name>CYCA_TAKRU</name>
<feature type="chain" id="PRO_0000266003" description="Cytochrome c-a">
    <location>
        <begin position="1"/>
        <end position="105"/>
    </location>
</feature>
<feature type="binding site" description="covalent" evidence="2">
    <location>
        <position position="15"/>
    </location>
    <ligand>
        <name>heme c</name>
        <dbReference type="ChEBI" id="CHEBI:61717"/>
    </ligand>
</feature>
<feature type="binding site" description="covalent" evidence="2">
    <location>
        <position position="18"/>
    </location>
    <ligand>
        <name>heme c</name>
        <dbReference type="ChEBI" id="CHEBI:61717"/>
    </ligand>
</feature>
<feature type="binding site" description="axial binding residue" evidence="2">
    <location>
        <position position="19"/>
    </location>
    <ligand>
        <name>heme c</name>
        <dbReference type="ChEBI" id="CHEBI:61717"/>
    </ligand>
    <ligandPart>
        <name>Fe</name>
        <dbReference type="ChEBI" id="CHEBI:18248"/>
    </ligandPart>
</feature>
<feature type="binding site" description="axial binding residue" evidence="2">
    <location>
        <position position="81"/>
    </location>
    <ligand>
        <name>heme c</name>
        <dbReference type="ChEBI" id="CHEBI:61717"/>
    </ligand>
    <ligandPart>
        <name>Fe</name>
        <dbReference type="ChEBI" id="CHEBI:18248"/>
    </ligandPart>
</feature>
<comment type="function">
    <text evidence="1">Electron carrier protein. The oxidized form of the cytochrome c heme group can accept an electron from the heme group of the cytochrome c1 subunit of cytochrome reductase. Cytochrome c then transfers this electron to the cytochrome oxidase complex, the final protein carrier in the mitochondrial electron-transport chain (By similarity).</text>
</comment>
<comment type="subcellular location">
    <subcellularLocation>
        <location evidence="1">Mitochondrion intermembrane space</location>
    </subcellularLocation>
    <text evidence="1">Loosely associated with the inner membrane.</text>
</comment>
<comment type="PTM">
    <text evidence="1">Binds 1 heme c group covalently per subunit.</text>
</comment>
<comment type="similarity">
    <text evidence="3">Belongs to the cytochrome c family.</text>
</comment>
<comment type="online information" name="Protein Spotlight">
    <link uri="https://www.proteinspotlight.org/back_issues/076"/>
    <text>Life shuttle - Issue 76 of November 2006</text>
</comment>
<organism>
    <name type="scientific">Takifugu rubripes</name>
    <name type="common">Japanese pufferfish</name>
    <name type="synonym">Fugu rubripes</name>
    <dbReference type="NCBI Taxonomy" id="31033"/>
    <lineage>
        <taxon>Eukaryota</taxon>
        <taxon>Metazoa</taxon>
        <taxon>Chordata</taxon>
        <taxon>Craniata</taxon>
        <taxon>Vertebrata</taxon>
        <taxon>Euteleostomi</taxon>
        <taxon>Actinopterygii</taxon>
        <taxon>Neopterygii</taxon>
        <taxon>Teleostei</taxon>
        <taxon>Neoteleostei</taxon>
        <taxon>Acanthomorphata</taxon>
        <taxon>Eupercaria</taxon>
        <taxon>Tetraodontiformes</taxon>
        <taxon>Tetradontoidea</taxon>
        <taxon>Tetraodontidae</taxon>
        <taxon>Takifugu</taxon>
    </lineage>
</organism>
<protein>
    <recommendedName>
        <fullName>Cytochrome c-a</fullName>
    </recommendedName>
</protein>
<evidence type="ECO:0000250" key="1"/>
<evidence type="ECO:0000255" key="2">
    <source>
        <dbReference type="PROSITE-ProRule" id="PRU00433"/>
    </source>
</evidence>
<evidence type="ECO:0000305" key="3"/>
<proteinExistence type="inferred from homology"/>
<sequence length="105" mass="11979">MGDIAKGKKIFVQRCSQCHTVTKEGRHKVGPNLWGLFGRKTGQAEGYSYTQANIEKGITWDEETLNVYLQNPKKYIPGTKMNFAGIRKKRERLDIIAYIKEATSK</sequence>
<accession>Q1KL06</accession>
<gene>
    <name type="primary">cyc-a</name>
</gene>
<reference key="1">
    <citation type="journal article" date="2006" name="Proc. Natl. Acad. Sci. U.S.A.">
        <title>Highly conserved syntenic blocks at the vertebrate Hox loci and conserved regulatory elements within and outside Hox gene clusters.</title>
        <authorList>
            <person name="Lee A.P."/>
            <person name="Koh E.G.L."/>
            <person name="Tay A."/>
            <person name="Brenner S."/>
            <person name="Venkatesh B."/>
        </authorList>
    </citation>
    <scope>NUCLEOTIDE SEQUENCE [GENOMIC DNA]</scope>
</reference>